<comment type="function">
    <text evidence="2">Has single-stranded DNA-stimulated ATPase and ATP-dependent DNA helicase (3' to 5') activity suggesting a role in nuclear processes such as recombination and transcription (By similarity). Proposed core component of the chromatin remodeling INO80 complex which exhibits DNA- and nucleosome-activated ATPase activity and catalyzes ATP-dependent nucleosome sliding (By similarity).</text>
</comment>
<comment type="catalytic activity">
    <reaction evidence="2">
        <text>ATP + H2O = ADP + phosphate + H(+)</text>
        <dbReference type="Rhea" id="RHEA:13065"/>
        <dbReference type="ChEBI" id="CHEBI:15377"/>
        <dbReference type="ChEBI" id="CHEBI:15378"/>
        <dbReference type="ChEBI" id="CHEBI:30616"/>
        <dbReference type="ChEBI" id="CHEBI:43474"/>
        <dbReference type="ChEBI" id="CHEBI:456216"/>
        <dbReference type="EC" id="3.6.4.12"/>
    </reaction>
    <physiologicalReaction direction="left-to-right" evidence="2">
        <dbReference type="Rhea" id="RHEA:13066"/>
    </physiologicalReaction>
</comment>
<comment type="subunit">
    <text evidence="2">Forms homohexameric rings (By similarity). Can form a dodecamer with ruvbl2 made of two stacked hexameric rings (By similarity). Is a component of the RNA polymerase II holoenzyme complex. Component of the chromatin-remodeling Ino80 complex (By similarity). Component of some MLL1/MLL complex (By similarity).</text>
</comment>
<comment type="subcellular location">
    <subcellularLocation>
        <location evidence="1">Nucleus</location>
    </subcellularLocation>
    <subcellularLocation>
        <location evidence="3">Dynein axonemal particle</location>
    </subcellularLocation>
</comment>
<comment type="developmental stage">
    <text>Strong expression in neural crest cells and in later stages in different gastrointestinal organs.</text>
</comment>
<comment type="similarity">
    <text evidence="4">Belongs to the RuvB family.</text>
</comment>
<keyword id="KW-0067">ATP-binding</keyword>
<keyword id="KW-0963">Cytoplasm</keyword>
<keyword id="KW-0227">DNA damage</keyword>
<keyword id="KW-0233">DNA recombination</keyword>
<keyword id="KW-0234">DNA repair</keyword>
<keyword id="KW-0347">Helicase</keyword>
<keyword id="KW-0378">Hydrolase</keyword>
<keyword id="KW-0547">Nucleotide-binding</keyword>
<keyword id="KW-0539">Nucleus</keyword>
<keyword id="KW-1185">Reference proteome</keyword>
<keyword id="KW-0804">Transcription</keyword>
<keyword id="KW-0805">Transcription regulation</keyword>
<sequence length="456" mass="50358">MKIEEVKSTTKTQRIATHSHVKGLGLDENGIAKQAAAGLVGQENAREACGVIVELIKSKKMAGRAVLLAGPPGTGKTALALAIAQELGNKVPFCPMVGSEVYSTEIKKTEVLMENFRRAIGLRIRETKEVYEGEVTELTPCETENPMGGYGKTISHVIIGLKTAKGTKQLKLDPSIYESLQKERVEVGDVIYIEANSGAVKRQGRSDTYATEFDLEAEEYVPLPKGDVHQKKEVIQDVTLHDLDVANARPQGGQDILSMMGQLMKPKKTEITDKLRGQINKVVNKYIDQGIAELVPGVLFIDEVHMLDIECFTYLHRALESSLAPIVIFATNRGNCIIRGTEDVASPHGIPLDLLDRVMIIRTMLYTPQEMKQIIKIRAQTEGINISEEALNHLGEIGTKTTLRYSVQLLTPANLLAKINGKDSIEKEHVEEINELFYDAKSSAKILAEQQEKFMK</sequence>
<feature type="chain" id="PRO_0000165643" description="RuvB-like 1">
    <location>
        <begin position="1"/>
        <end position="456"/>
    </location>
</feature>
<feature type="binding site" evidence="1">
    <location>
        <begin position="70"/>
        <end position="77"/>
    </location>
    <ligand>
        <name>ATP</name>
        <dbReference type="ChEBI" id="CHEBI:30616"/>
    </ligand>
</feature>
<gene>
    <name type="primary">ruvbl1</name>
</gene>
<organism>
    <name type="scientific">Xenopus laevis</name>
    <name type="common">African clawed frog</name>
    <dbReference type="NCBI Taxonomy" id="8355"/>
    <lineage>
        <taxon>Eukaryota</taxon>
        <taxon>Metazoa</taxon>
        <taxon>Chordata</taxon>
        <taxon>Craniata</taxon>
        <taxon>Vertebrata</taxon>
        <taxon>Euteleostomi</taxon>
        <taxon>Amphibia</taxon>
        <taxon>Batrachia</taxon>
        <taxon>Anura</taxon>
        <taxon>Pipoidea</taxon>
        <taxon>Pipidae</taxon>
        <taxon>Xenopodinae</taxon>
        <taxon>Xenopus</taxon>
        <taxon>Xenopus</taxon>
    </lineage>
</organism>
<reference key="1">
    <citation type="journal article" date="2000" name="Mech. Dev.">
        <title>Expression of Xenopus homologs of the beta-catenin binding protein pontin52.</title>
        <authorList>
            <person name="Etard C."/>
            <person name="Wedlich D."/>
            <person name="Bauer A."/>
            <person name="Huber O."/>
            <person name="Kuehl M."/>
        </authorList>
    </citation>
    <scope>NUCLEOTIDE SEQUENCE [MRNA]</scope>
</reference>
<reference key="2">
    <citation type="journal article" date="2018" name="Elife">
        <title>A liquid-like organelle at the root of motile ciliopathy.</title>
        <authorList>
            <person name="Huizar R.L."/>
            <person name="Lee C."/>
            <person name="Boulgakov A.A."/>
            <person name="Horani A."/>
            <person name="Tu F."/>
            <person name="Marcotte E.M."/>
            <person name="Brody S.L."/>
            <person name="Wallingford J.B."/>
        </authorList>
    </citation>
    <scope>SUBCELLULAR LOCATION</scope>
</reference>
<protein>
    <recommendedName>
        <fullName>RuvB-like 1</fullName>
        <ecNumber evidence="2">3.6.4.12</ecNumber>
    </recommendedName>
    <alternativeName>
        <fullName>Pontin</fullName>
    </alternativeName>
</protein>
<name>RUVB1_XENLA</name>
<evidence type="ECO:0000250" key="1"/>
<evidence type="ECO:0000250" key="2">
    <source>
        <dbReference type="UniProtKB" id="Q9Y265"/>
    </source>
</evidence>
<evidence type="ECO:0000269" key="3">
    <source>
    </source>
</evidence>
<evidence type="ECO:0000305" key="4"/>
<proteinExistence type="evidence at transcript level"/>
<dbReference type="EC" id="3.6.4.12" evidence="2"/>
<dbReference type="EMBL" id="AF218072">
    <property type="protein sequence ID" value="AAG44127.1"/>
    <property type="molecule type" value="mRNA"/>
</dbReference>
<dbReference type="SMR" id="Q9DE26"/>
<dbReference type="AGR" id="Xenbase:XB-GENE-486365"/>
<dbReference type="Xenbase" id="XB-GENE-486365">
    <property type="gene designation" value="ruvbl1.S"/>
</dbReference>
<dbReference type="OrthoDB" id="10060499at2759"/>
<dbReference type="Proteomes" id="UP000186698">
    <property type="component" value="Unplaced"/>
</dbReference>
<dbReference type="GO" id="GO:0120293">
    <property type="term" value="C:dynein axonemal particle"/>
    <property type="evidence" value="ECO:0000314"/>
    <property type="project" value="UniProtKB"/>
</dbReference>
<dbReference type="GO" id="GO:0031011">
    <property type="term" value="C:Ino80 complex"/>
    <property type="evidence" value="ECO:0000318"/>
    <property type="project" value="GO_Central"/>
</dbReference>
<dbReference type="GO" id="GO:0071339">
    <property type="term" value="C:MLL1 complex"/>
    <property type="evidence" value="ECO:0000250"/>
    <property type="project" value="UniProtKB"/>
</dbReference>
<dbReference type="GO" id="GO:0035267">
    <property type="term" value="C:NuA4 histone acetyltransferase complex"/>
    <property type="evidence" value="ECO:0000318"/>
    <property type="project" value="GO_Central"/>
</dbReference>
<dbReference type="GO" id="GO:0097255">
    <property type="term" value="C:R2TP complex"/>
    <property type="evidence" value="ECO:0000318"/>
    <property type="project" value="GO_Central"/>
</dbReference>
<dbReference type="GO" id="GO:0000812">
    <property type="term" value="C:Swr1 complex"/>
    <property type="evidence" value="ECO:0000250"/>
    <property type="project" value="UniProtKB"/>
</dbReference>
<dbReference type="GO" id="GO:0005524">
    <property type="term" value="F:ATP binding"/>
    <property type="evidence" value="ECO:0007669"/>
    <property type="project" value="UniProtKB-KW"/>
</dbReference>
<dbReference type="GO" id="GO:0016887">
    <property type="term" value="F:ATP hydrolysis activity"/>
    <property type="evidence" value="ECO:0007669"/>
    <property type="project" value="InterPro"/>
</dbReference>
<dbReference type="GO" id="GO:0003678">
    <property type="term" value="F:DNA helicase activity"/>
    <property type="evidence" value="ECO:0000318"/>
    <property type="project" value="GO_Central"/>
</dbReference>
<dbReference type="GO" id="GO:0000492">
    <property type="term" value="P:box C/D snoRNP assembly"/>
    <property type="evidence" value="ECO:0000318"/>
    <property type="project" value="GO_Central"/>
</dbReference>
<dbReference type="GO" id="GO:0006338">
    <property type="term" value="P:chromatin remodeling"/>
    <property type="evidence" value="ECO:0000318"/>
    <property type="project" value="GO_Central"/>
</dbReference>
<dbReference type="GO" id="GO:0006310">
    <property type="term" value="P:DNA recombination"/>
    <property type="evidence" value="ECO:0007669"/>
    <property type="project" value="UniProtKB-KW"/>
</dbReference>
<dbReference type="GO" id="GO:0006281">
    <property type="term" value="P:DNA repair"/>
    <property type="evidence" value="ECO:0007669"/>
    <property type="project" value="UniProtKB-KW"/>
</dbReference>
<dbReference type="GO" id="GO:0006357">
    <property type="term" value="P:regulation of transcription by RNA polymerase II"/>
    <property type="evidence" value="ECO:0000318"/>
    <property type="project" value="GO_Central"/>
</dbReference>
<dbReference type="FunFam" id="1.10.8.60:FF:000010">
    <property type="entry name" value="RuvB-like helicase"/>
    <property type="match status" value="1"/>
</dbReference>
<dbReference type="FunFam" id="2.40.50.360:FF:000001">
    <property type="entry name" value="RuvB-like helicase"/>
    <property type="match status" value="1"/>
</dbReference>
<dbReference type="Gene3D" id="1.10.8.60">
    <property type="match status" value="1"/>
</dbReference>
<dbReference type="Gene3D" id="3.40.50.300">
    <property type="entry name" value="P-loop containing nucleotide triphosphate hydrolases"/>
    <property type="match status" value="1"/>
</dbReference>
<dbReference type="Gene3D" id="2.40.50.360">
    <property type="entry name" value="RuvB-like helicase, domain II"/>
    <property type="match status" value="1"/>
</dbReference>
<dbReference type="InterPro" id="IPR003593">
    <property type="entry name" value="AAA+_ATPase"/>
</dbReference>
<dbReference type="InterPro" id="IPR027417">
    <property type="entry name" value="P-loop_NTPase"/>
</dbReference>
<dbReference type="InterPro" id="IPR027238">
    <property type="entry name" value="RuvB-like"/>
</dbReference>
<dbReference type="InterPro" id="IPR041048">
    <property type="entry name" value="RuvB-like_C"/>
</dbReference>
<dbReference type="InterPro" id="IPR042487">
    <property type="entry name" value="RuvBL1/2_DNA/RNA_bd_dom"/>
</dbReference>
<dbReference type="InterPro" id="IPR010339">
    <property type="entry name" value="TIP49_P-loop"/>
</dbReference>
<dbReference type="PANTHER" id="PTHR11093">
    <property type="entry name" value="RUVB-RELATED REPTIN AND PONTIN"/>
    <property type="match status" value="1"/>
</dbReference>
<dbReference type="Pfam" id="PF06068">
    <property type="entry name" value="TIP49"/>
    <property type="match status" value="1"/>
</dbReference>
<dbReference type="Pfam" id="PF17856">
    <property type="entry name" value="TIP49_C"/>
    <property type="match status" value="1"/>
</dbReference>
<dbReference type="SMART" id="SM00382">
    <property type="entry name" value="AAA"/>
    <property type="match status" value="1"/>
</dbReference>
<dbReference type="SUPFAM" id="SSF52540">
    <property type="entry name" value="P-loop containing nucleoside triphosphate hydrolases"/>
    <property type="match status" value="1"/>
</dbReference>
<accession>Q9DE26</accession>